<gene>
    <name evidence="1" type="primary">lspA</name>
    <name type="ordered locus">YPTB0618</name>
</gene>
<organism>
    <name type="scientific">Yersinia pseudotuberculosis serotype I (strain IP32953)</name>
    <dbReference type="NCBI Taxonomy" id="273123"/>
    <lineage>
        <taxon>Bacteria</taxon>
        <taxon>Pseudomonadati</taxon>
        <taxon>Pseudomonadota</taxon>
        <taxon>Gammaproteobacteria</taxon>
        <taxon>Enterobacterales</taxon>
        <taxon>Yersiniaceae</taxon>
        <taxon>Yersinia</taxon>
    </lineage>
</organism>
<proteinExistence type="inferred from homology"/>
<dbReference type="EC" id="3.4.23.36" evidence="1"/>
<dbReference type="EMBL" id="BX936398">
    <property type="protein sequence ID" value="CAH19858.1"/>
    <property type="molecule type" value="Genomic_DNA"/>
</dbReference>
<dbReference type="RefSeq" id="WP_002210508.1">
    <property type="nucleotide sequence ID" value="NZ_CP009712.1"/>
</dbReference>
<dbReference type="SMR" id="Q66ES3"/>
<dbReference type="MEROPS" id="A08.001"/>
<dbReference type="GeneID" id="57974134"/>
<dbReference type="KEGG" id="ypo:BZ17_1938"/>
<dbReference type="KEGG" id="yps:YPTB0618"/>
<dbReference type="PATRIC" id="fig|273123.14.peg.2061"/>
<dbReference type="UniPathway" id="UPA00665"/>
<dbReference type="Proteomes" id="UP000001011">
    <property type="component" value="Chromosome"/>
</dbReference>
<dbReference type="GO" id="GO:0005886">
    <property type="term" value="C:plasma membrane"/>
    <property type="evidence" value="ECO:0007669"/>
    <property type="project" value="UniProtKB-SubCell"/>
</dbReference>
<dbReference type="GO" id="GO:0004190">
    <property type="term" value="F:aspartic-type endopeptidase activity"/>
    <property type="evidence" value="ECO:0007669"/>
    <property type="project" value="UniProtKB-UniRule"/>
</dbReference>
<dbReference type="GO" id="GO:0006508">
    <property type="term" value="P:proteolysis"/>
    <property type="evidence" value="ECO:0007669"/>
    <property type="project" value="UniProtKB-KW"/>
</dbReference>
<dbReference type="HAMAP" id="MF_00161">
    <property type="entry name" value="LspA"/>
    <property type="match status" value="1"/>
</dbReference>
<dbReference type="InterPro" id="IPR001872">
    <property type="entry name" value="Peptidase_A8"/>
</dbReference>
<dbReference type="NCBIfam" id="TIGR00077">
    <property type="entry name" value="lspA"/>
    <property type="match status" value="1"/>
</dbReference>
<dbReference type="PANTHER" id="PTHR33695">
    <property type="entry name" value="LIPOPROTEIN SIGNAL PEPTIDASE"/>
    <property type="match status" value="1"/>
</dbReference>
<dbReference type="PANTHER" id="PTHR33695:SF1">
    <property type="entry name" value="LIPOPROTEIN SIGNAL PEPTIDASE"/>
    <property type="match status" value="1"/>
</dbReference>
<dbReference type="Pfam" id="PF01252">
    <property type="entry name" value="Peptidase_A8"/>
    <property type="match status" value="1"/>
</dbReference>
<dbReference type="PRINTS" id="PR00781">
    <property type="entry name" value="LIPOSIGPTASE"/>
</dbReference>
<dbReference type="PROSITE" id="PS00855">
    <property type="entry name" value="SPASE_II"/>
    <property type="match status" value="1"/>
</dbReference>
<keyword id="KW-0064">Aspartyl protease</keyword>
<keyword id="KW-0997">Cell inner membrane</keyword>
<keyword id="KW-1003">Cell membrane</keyword>
<keyword id="KW-0378">Hydrolase</keyword>
<keyword id="KW-0472">Membrane</keyword>
<keyword id="KW-0645">Protease</keyword>
<keyword id="KW-0812">Transmembrane</keyword>
<keyword id="KW-1133">Transmembrane helix</keyword>
<accession>Q66ES3</accession>
<comment type="function">
    <text evidence="1">This protein specifically catalyzes the removal of signal peptides from prolipoproteins.</text>
</comment>
<comment type="catalytic activity">
    <reaction evidence="1">
        <text>Release of signal peptides from bacterial membrane prolipoproteins. Hydrolyzes -Xaa-Yaa-Zaa-|-(S,diacylglyceryl)Cys-, in which Xaa is hydrophobic (preferably Leu), and Yaa (Ala or Ser) and Zaa (Gly or Ala) have small, neutral side chains.</text>
        <dbReference type="EC" id="3.4.23.36"/>
    </reaction>
</comment>
<comment type="pathway">
    <text evidence="1">Protein modification; lipoprotein biosynthesis (signal peptide cleavage).</text>
</comment>
<comment type="subcellular location">
    <subcellularLocation>
        <location evidence="1">Cell inner membrane</location>
        <topology evidence="1">Multi-pass membrane protein</topology>
    </subcellularLocation>
</comment>
<comment type="similarity">
    <text evidence="1">Belongs to the peptidase A8 family.</text>
</comment>
<protein>
    <recommendedName>
        <fullName evidence="1">Lipoprotein signal peptidase</fullName>
        <ecNumber evidence="1">3.4.23.36</ecNumber>
    </recommendedName>
    <alternativeName>
        <fullName evidence="1">Prolipoprotein signal peptidase</fullName>
    </alternativeName>
    <alternativeName>
        <fullName evidence="1">Signal peptidase II</fullName>
        <shortName evidence="1">SPase II</shortName>
    </alternativeName>
</protein>
<feature type="chain" id="PRO_0000289467" description="Lipoprotein signal peptidase">
    <location>
        <begin position="1"/>
        <end position="169"/>
    </location>
</feature>
<feature type="transmembrane region" description="Helical" evidence="1">
    <location>
        <begin position="4"/>
        <end position="24"/>
    </location>
</feature>
<feature type="transmembrane region" description="Helical" evidence="1">
    <location>
        <begin position="29"/>
        <end position="49"/>
    </location>
</feature>
<feature type="transmembrane region" description="Helical" evidence="1">
    <location>
        <begin position="70"/>
        <end position="90"/>
    </location>
</feature>
<feature type="transmembrane region" description="Helical" evidence="1">
    <location>
        <begin position="101"/>
        <end position="121"/>
    </location>
</feature>
<feature type="transmembrane region" description="Helical" evidence="1">
    <location>
        <begin position="137"/>
        <end position="157"/>
    </location>
</feature>
<feature type="active site" evidence="1">
    <location>
        <position position="123"/>
    </location>
</feature>
<feature type="active site" evidence="1">
    <location>
        <position position="141"/>
    </location>
</feature>
<sequence length="169" mass="18937">MNKPICSTGLRWLWLAVVVVILDISSKQWVMAHFALYESVPLIPFFNLTYAQNFGAAFSFLADKSGWQRWFFAGIAIGISVVLMVMMYRSTAKQRLINCAYALIIGGALGNLYDRLVHGAVNDFLDFYINNWHFPTFNLADVAICIGAALVIFEGFLSPVEKNAVNNDE</sequence>
<reference key="1">
    <citation type="journal article" date="2004" name="Proc. Natl. Acad. Sci. U.S.A.">
        <title>Insights into the evolution of Yersinia pestis through whole-genome comparison with Yersinia pseudotuberculosis.</title>
        <authorList>
            <person name="Chain P.S.G."/>
            <person name="Carniel E."/>
            <person name="Larimer F.W."/>
            <person name="Lamerdin J."/>
            <person name="Stoutland P.O."/>
            <person name="Regala W.M."/>
            <person name="Georgescu A.M."/>
            <person name="Vergez L.M."/>
            <person name="Land M.L."/>
            <person name="Motin V.L."/>
            <person name="Brubaker R.R."/>
            <person name="Fowler J."/>
            <person name="Hinnebusch J."/>
            <person name="Marceau M."/>
            <person name="Medigue C."/>
            <person name="Simonet M."/>
            <person name="Chenal-Francisque V."/>
            <person name="Souza B."/>
            <person name="Dacheux D."/>
            <person name="Elliott J.M."/>
            <person name="Derbise A."/>
            <person name="Hauser L.J."/>
            <person name="Garcia E."/>
        </authorList>
    </citation>
    <scope>NUCLEOTIDE SEQUENCE [LARGE SCALE GENOMIC DNA]</scope>
    <source>
        <strain>IP32953</strain>
    </source>
</reference>
<evidence type="ECO:0000255" key="1">
    <source>
        <dbReference type="HAMAP-Rule" id="MF_00161"/>
    </source>
</evidence>
<name>LSPA_YERPS</name>